<keyword id="KW-0472">Membrane</keyword>
<keyword id="KW-1185">Reference proteome</keyword>
<keyword id="KW-0812">Transmembrane</keyword>
<keyword id="KW-1133">Transmembrane helix</keyword>
<comment type="subcellular location">
    <subcellularLocation>
        <location evidence="2">Membrane</location>
        <topology evidence="2">Single-pass membrane protein</topology>
    </subcellularLocation>
</comment>
<comment type="similarity">
    <text evidence="2">Belongs to the FAM163 family.</text>
</comment>
<sequence length="155" mass="17455">MTAGTVVITGGILATVILLCIIAVLCYCRLQYYCCKKEDSEEDEEEPDFAVHSRFPPMHSNRNIVLANGPSIYSSPYNKKHQHCRSVCTHHEPPAFLLHPPEEIRNGGERIAYKTISQEEIELPVNVSNLQVLNPNRLSAMREAFSRSRSISTDV</sequence>
<protein>
    <recommendedName>
        <fullName>Protein FAM163B</fullName>
    </recommendedName>
</protein>
<dbReference type="EMBL" id="BC118774">
    <property type="protein sequence ID" value="AAI18775.1"/>
    <property type="molecule type" value="mRNA"/>
</dbReference>
<dbReference type="RefSeq" id="NP_001072209.1">
    <property type="nucleotide sequence ID" value="NM_001078741.1"/>
</dbReference>
<dbReference type="RefSeq" id="XP_031746390.1">
    <property type="nucleotide sequence ID" value="XM_031890530.1"/>
</dbReference>
<dbReference type="SMR" id="Q0VFM5"/>
<dbReference type="FunCoup" id="Q0VFM5">
    <property type="interactions" value="17"/>
</dbReference>
<dbReference type="STRING" id="8364.ENSXETP00000016281"/>
<dbReference type="PaxDb" id="8364-ENSXETP00000049999"/>
<dbReference type="DNASU" id="779655"/>
<dbReference type="GeneID" id="779655"/>
<dbReference type="KEGG" id="xtr:779655"/>
<dbReference type="AGR" id="Xenbase:XB-GENE-5846539"/>
<dbReference type="CTD" id="642968"/>
<dbReference type="Xenbase" id="XB-GENE-5846539">
    <property type="gene designation" value="fam163b"/>
</dbReference>
<dbReference type="eggNOG" id="ENOG502RY59">
    <property type="taxonomic scope" value="Eukaryota"/>
</dbReference>
<dbReference type="HOGENOM" id="CLU_138617_0_0_1"/>
<dbReference type="InParanoid" id="Q0VFM5"/>
<dbReference type="OMA" id="DFAVHAH"/>
<dbReference type="OrthoDB" id="9937973at2759"/>
<dbReference type="PhylomeDB" id="Q0VFM5"/>
<dbReference type="TreeFam" id="TF333084"/>
<dbReference type="Proteomes" id="UP000008143">
    <property type="component" value="Chromosome 8"/>
</dbReference>
<dbReference type="Bgee" id="ENSXETG00000035626">
    <property type="expression patterns" value="Expressed in brain and 9 other cell types or tissues"/>
</dbReference>
<dbReference type="GO" id="GO:0016020">
    <property type="term" value="C:membrane"/>
    <property type="evidence" value="ECO:0007669"/>
    <property type="project" value="UniProtKB-SubCell"/>
</dbReference>
<dbReference type="InterPro" id="IPR029379">
    <property type="entry name" value="FAM163"/>
</dbReference>
<dbReference type="InterPro" id="IPR040280">
    <property type="entry name" value="FAM163B"/>
</dbReference>
<dbReference type="PANTHER" id="PTHR31396:SF2">
    <property type="entry name" value="PROTEIN FAM163B"/>
    <property type="match status" value="1"/>
</dbReference>
<dbReference type="PANTHER" id="PTHR31396">
    <property type="entry name" value="PROTEIN FAM163B MEMBER"/>
    <property type="match status" value="1"/>
</dbReference>
<dbReference type="Pfam" id="PF15069">
    <property type="entry name" value="FAM163"/>
    <property type="match status" value="1"/>
</dbReference>
<evidence type="ECO:0000255" key="1"/>
<evidence type="ECO:0000305" key="2"/>
<name>F163B_XENTR</name>
<gene>
    <name type="primary">fam163b</name>
</gene>
<feature type="chain" id="PRO_0000280260" description="Protein FAM163B">
    <location>
        <begin position="1"/>
        <end position="155"/>
    </location>
</feature>
<feature type="transmembrane region" description="Helical" evidence="1">
    <location>
        <begin position="6"/>
        <end position="26"/>
    </location>
</feature>
<proteinExistence type="evidence at transcript level"/>
<organism>
    <name type="scientific">Xenopus tropicalis</name>
    <name type="common">Western clawed frog</name>
    <name type="synonym">Silurana tropicalis</name>
    <dbReference type="NCBI Taxonomy" id="8364"/>
    <lineage>
        <taxon>Eukaryota</taxon>
        <taxon>Metazoa</taxon>
        <taxon>Chordata</taxon>
        <taxon>Craniata</taxon>
        <taxon>Vertebrata</taxon>
        <taxon>Euteleostomi</taxon>
        <taxon>Amphibia</taxon>
        <taxon>Batrachia</taxon>
        <taxon>Anura</taxon>
        <taxon>Pipoidea</taxon>
        <taxon>Pipidae</taxon>
        <taxon>Xenopodinae</taxon>
        <taxon>Xenopus</taxon>
        <taxon>Silurana</taxon>
    </lineage>
</organism>
<reference key="1">
    <citation type="submission" date="2006-07" db="EMBL/GenBank/DDBJ databases">
        <authorList>
            <consortium name="NIH - Xenopus Gene Collection (XGC) project"/>
        </authorList>
    </citation>
    <scope>NUCLEOTIDE SEQUENCE [LARGE SCALE MRNA]</scope>
    <source>
        <tissue>Brain</tissue>
    </source>
</reference>
<accession>Q0VFM5</accession>